<keyword id="KW-0021">Allosteric enzyme</keyword>
<keyword id="KW-0328">Glycosyltransferase</keyword>
<keyword id="KW-0342">GTP-binding</keyword>
<keyword id="KW-0460">Magnesium</keyword>
<keyword id="KW-0547">Nucleotide-binding</keyword>
<keyword id="KW-0808">Transferase</keyword>
<gene>
    <name evidence="1" type="primary">upp</name>
    <name type="ordered locus">PFLU_0899</name>
</gene>
<name>UPP_PSEFS</name>
<protein>
    <recommendedName>
        <fullName evidence="1">Uracil phosphoribosyltransferase</fullName>
        <ecNumber evidence="1">2.4.2.9</ecNumber>
    </recommendedName>
    <alternativeName>
        <fullName evidence="1">UMP pyrophosphorylase</fullName>
    </alternativeName>
    <alternativeName>
        <fullName evidence="1">UPRTase</fullName>
    </alternativeName>
</protein>
<proteinExistence type="inferred from homology"/>
<evidence type="ECO:0000255" key="1">
    <source>
        <dbReference type="HAMAP-Rule" id="MF_01218"/>
    </source>
</evidence>
<sequence>MPTREIRHPLIRHKLGLMRRADISTKNFRELAQEVGALLTYEATKDLPLETYDIEGWAGTVQVEKIAGKKITVVPILRAGIGMLEGVLSLIPGAKVSAVGVARNEETLQAHTYLEKLVPEINERLAMIIDPMLATGSSMVATIDLLKKAGCKDIRAMVLVAAPEGIAAVEKAHPDVQIYTASIDERLNEHGYIIPGLGDAGDKIFGTKQKDA</sequence>
<reference key="1">
    <citation type="journal article" date="2009" name="Genome Biol.">
        <title>Genomic and genetic analyses of diversity and plant interactions of Pseudomonas fluorescens.</title>
        <authorList>
            <person name="Silby M.W."/>
            <person name="Cerdeno-Tarraga A.M."/>
            <person name="Vernikos G.S."/>
            <person name="Giddens S.R."/>
            <person name="Jackson R.W."/>
            <person name="Preston G.M."/>
            <person name="Zhang X.-X."/>
            <person name="Moon C.D."/>
            <person name="Gehrig S.M."/>
            <person name="Godfrey S.A.C."/>
            <person name="Knight C.G."/>
            <person name="Malone J.G."/>
            <person name="Robinson Z."/>
            <person name="Spiers A.J."/>
            <person name="Harris S."/>
            <person name="Challis G.L."/>
            <person name="Yaxley A.M."/>
            <person name="Harris D."/>
            <person name="Seeger K."/>
            <person name="Murphy L."/>
            <person name="Rutter S."/>
            <person name="Squares R."/>
            <person name="Quail M.A."/>
            <person name="Saunders E."/>
            <person name="Mavromatis K."/>
            <person name="Brettin T.S."/>
            <person name="Bentley S.D."/>
            <person name="Hothersall J."/>
            <person name="Stephens E."/>
            <person name="Thomas C.M."/>
            <person name="Parkhill J."/>
            <person name="Levy S.B."/>
            <person name="Rainey P.B."/>
            <person name="Thomson N.R."/>
        </authorList>
    </citation>
    <scope>NUCLEOTIDE SEQUENCE [LARGE SCALE GENOMIC DNA]</scope>
    <source>
        <strain>SBW25</strain>
    </source>
</reference>
<organism>
    <name type="scientific">Pseudomonas fluorescens (strain SBW25)</name>
    <dbReference type="NCBI Taxonomy" id="216595"/>
    <lineage>
        <taxon>Bacteria</taxon>
        <taxon>Pseudomonadati</taxon>
        <taxon>Pseudomonadota</taxon>
        <taxon>Gammaproteobacteria</taxon>
        <taxon>Pseudomonadales</taxon>
        <taxon>Pseudomonadaceae</taxon>
        <taxon>Pseudomonas</taxon>
    </lineage>
</organism>
<dbReference type="EC" id="2.4.2.9" evidence="1"/>
<dbReference type="EMBL" id="AM181176">
    <property type="protein sequence ID" value="CAY47166.1"/>
    <property type="molecule type" value="Genomic_DNA"/>
</dbReference>
<dbReference type="RefSeq" id="WP_012722253.1">
    <property type="nucleotide sequence ID" value="NC_012660.1"/>
</dbReference>
<dbReference type="SMR" id="C3KAJ8"/>
<dbReference type="STRING" id="294.SRM1_04778"/>
<dbReference type="GeneID" id="93462522"/>
<dbReference type="eggNOG" id="COG0035">
    <property type="taxonomic scope" value="Bacteria"/>
</dbReference>
<dbReference type="HOGENOM" id="CLU_067096_2_2_6"/>
<dbReference type="OrthoDB" id="9781675at2"/>
<dbReference type="UniPathway" id="UPA00574">
    <property type="reaction ID" value="UER00636"/>
</dbReference>
<dbReference type="GO" id="GO:0005525">
    <property type="term" value="F:GTP binding"/>
    <property type="evidence" value="ECO:0007669"/>
    <property type="project" value="UniProtKB-KW"/>
</dbReference>
<dbReference type="GO" id="GO:0000287">
    <property type="term" value="F:magnesium ion binding"/>
    <property type="evidence" value="ECO:0007669"/>
    <property type="project" value="UniProtKB-UniRule"/>
</dbReference>
<dbReference type="GO" id="GO:0004845">
    <property type="term" value="F:uracil phosphoribosyltransferase activity"/>
    <property type="evidence" value="ECO:0007669"/>
    <property type="project" value="UniProtKB-UniRule"/>
</dbReference>
<dbReference type="GO" id="GO:0044206">
    <property type="term" value="P:UMP salvage"/>
    <property type="evidence" value="ECO:0007669"/>
    <property type="project" value="UniProtKB-UniRule"/>
</dbReference>
<dbReference type="GO" id="GO:0006223">
    <property type="term" value="P:uracil salvage"/>
    <property type="evidence" value="ECO:0007669"/>
    <property type="project" value="InterPro"/>
</dbReference>
<dbReference type="CDD" id="cd06223">
    <property type="entry name" value="PRTases_typeI"/>
    <property type="match status" value="1"/>
</dbReference>
<dbReference type="FunFam" id="3.40.50.2020:FF:000003">
    <property type="entry name" value="Uracil phosphoribosyltransferase"/>
    <property type="match status" value="1"/>
</dbReference>
<dbReference type="Gene3D" id="3.40.50.2020">
    <property type="match status" value="1"/>
</dbReference>
<dbReference type="HAMAP" id="MF_01218_B">
    <property type="entry name" value="Upp_B"/>
    <property type="match status" value="1"/>
</dbReference>
<dbReference type="InterPro" id="IPR000836">
    <property type="entry name" value="PRibTrfase_dom"/>
</dbReference>
<dbReference type="InterPro" id="IPR029057">
    <property type="entry name" value="PRTase-like"/>
</dbReference>
<dbReference type="InterPro" id="IPR034332">
    <property type="entry name" value="Upp_B"/>
</dbReference>
<dbReference type="InterPro" id="IPR050054">
    <property type="entry name" value="UPRTase/APRTase"/>
</dbReference>
<dbReference type="InterPro" id="IPR005765">
    <property type="entry name" value="Ura_phspho_trans"/>
</dbReference>
<dbReference type="NCBIfam" id="NF001097">
    <property type="entry name" value="PRK00129.1"/>
    <property type="match status" value="1"/>
</dbReference>
<dbReference type="NCBIfam" id="TIGR01091">
    <property type="entry name" value="upp"/>
    <property type="match status" value="1"/>
</dbReference>
<dbReference type="PANTHER" id="PTHR32315">
    <property type="entry name" value="ADENINE PHOSPHORIBOSYLTRANSFERASE"/>
    <property type="match status" value="1"/>
</dbReference>
<dbReference type="PANTHER" id="PTHR32315:SF4">
    <property type="entry name" value="URACIL PHOSPHORIBOSYLTRANSFERASE, CHLOROPLASTIC"/>
    <property type="match status" value="1"/>
</dbReference>
<dbReference type="Pfam" id="PF14681">
    <property type="entry name" value="UPRTase"/>
    <property type="match status" value="1"/>
</dbReference>
<dbReference type="SUPFAM" id="SSF53271">
    <property type="entry name" value="PRTase-like"/>
    <property type="match status" value="1"/>
</dbReference>
<accession>C3KAJ8</accession>
<comment type="function">
    <text evidence="1">Catalyzes the conversion of uracil and 5-phospho-alpha-D-ribose 1-diphosphate (PRPP) to UMP and diphosphate.</text>
</comment>
<comment type="catalytic activity">
    <reaction evidence="1">
        <text>UMP + diphosphate = 5-phospho-alpha-D-ribose 1-diphosphate + uracil</text>
        <dbReference type="Rhea" id="RHEA:13017"/>
        <dbReference type="ChEBI" id="CHEBI:17568"/>
        <dbReference type="ChEBI" id="CHEBI:33019"/>
        <dbReference type="ChEBI" id="CHEBI:57865"/>
        <dbReference type="ChEBI" id="CHEBI:58017"/>
        <dbReference type="EC" id="2.4.2.9"/>
    </reaction>
</comment>
<comment type="cofactor">
    <cofactor evidence="1">
        <name>Mg(2+)</name>
        <dbReference type="ChEBI" id="CHEBI:18420"/>
    </cofactor>
    <text evidence="1">Binds 1 Mg(2+) ion per subunit. The magnesium is bound as Mg-PRPP.</text>
</comment>
<comment type="activity regulation">
    <text evidence="1">Allosterically activated by GTP.</text>
</comment>
<comment type="pathway">
    <text evidence="1">Pyrimidine metabolism; UMP biosynthesis via salvage pathway; UMP from uracil: step 1/1.</text>
</comment>
<comment type="similarity">
    <text evidence="1">Belongs to the UPRTase family.</text>
</comment>
<feature type="chain" id="PRO_1000213937" description="Uracil phosphoribosyltransferase">
    <location>
        <begin position="1"/>
        <end position="212"/>
    </location>
</feature>
<feature type="binding site" evidence="1">
    <location>
        <position position="78"/>
    </location>
    <ligand>
        <name>5-phospho-alpha-D-ribose 1-diphosphate</name>
        <dbReference type="ChEBI" id="CHEBI:58017"/>
    </ligand>
</feature>
<feature type="binding site" evidence="1">
    <location>
        <position position="103"/>
    </location>
    <ligand>
        <name>5-phospho-alpha-D-ribose 1-diphosphate</name>
        <dbReference type="ChEBI" id="CHEBI:58017"/>
    </ligand>
</feature>
<feature type="binding site" evidence="1">
    <location>
        <begin position="130"/>
        <end position="138"/>
    </location>
    <ligand>
        <name>5-phospho-alpha-D-ribose 1-diphosphate</name>
        <dbReference type="ChEBI" id="CHEBI:58017"/>
    </ligand>
</feature>
<feature type="binding site" evidence="1">
    <location>
        <position position="193"/>
    </location>
    <ligand>
        <name>uracil</name>
        <dbReference type="ChEBI" id="CHEBI:17568"/>
    </ligand>
</feature>
<feature type="binding site" evidence="1">
    <location>
        <begin position="198"/>
        <end position="200"/>
    </location>
    <ligand>
        <name>uracil</name>
        <dbReference type="ChEBI" id="CHEBI:17568"/>
    </ligand>
</feature>
<feature type="binding site" evidence="1">
    <location>
        <position position="199"/>
    </location>
    <ligand>
        <name>5-phospho-alpha-D-ribose 1-diphosphate</name>
        <dbReference type="ChEBI" id="CHEBI:58017"/>
    </ligand>
</feature>